<evidence type="ECO:0000255" key="1">
    <source>
        <dbReference type="HAMAP-Rule" id="MF_01011"/>
    </source>
</evidence>
<comment type="function">
    <text evidence="1">Dual-specificity methyltransferase that catalyzes the formation of 5-methyluridine at position 54 (m5U54) in all tRNAs, and that of position 341 (m5U341) in tmRNA (transfer-mRNA).</text>
</comment>
<comment type="catalytic activity">
    <reaction evidence="1">
        <text>uridine(54) in tRNA + S-adenosyl-L-methionine = 5-methyluridine(54) in tRNA + S-adenosyl-L-homocysteine + H(+)</text>
        <dbReference type="Rhea" id="RHEA:42712"/>
        <dbReference type="Rhea" id="RHEA-COMP:10167"/>
        <dbReference type="Rhea" id="RHEA-COMP:10193"/>
        <dbReference type="ChEBI" id="CHEBI:15378"/>
        <dbReference type="ChEBI" id="CHEBI:57856"/>
        <dbReference type="ChEBI" id="CHEBI:59789"/>
        <dbReference type="ChEBI" id="CHEBI:65315"/>
        <dbReference type="ChEBI" id="CHEBI:74447"/>
        <dbReference type="EC" id="2.1.1.35"/>
    </reaction>
</comment>
<comment type="catalytic activity">
    <reaction evidence="1">
        <text>uridine(341) in tmRNA + S-adenosyl-L-methionine = 5-methyluridine(341) in tmRNA + S-adenosyl-L-homocysteine + H(+)</text>
        <dbReference type="Rhea" id="RHEA:43612"/>
        <dbReference type="Rhea" id="RHEA-COMP:10630"/>
        <dbReference type="Rhea" id="RHEA-COMP:10631"/>
        <dbReference type="ChEBI" id="CHEBI:15378"/>
        <dbReference type="ChEBI" id="CHEBI:57856"/>
        <dbReference type="ChEBI" id="CHEBI:59789"/>
        <dbReference type="ChEBI" id="CHEBI:65315"/>
        <dbReference type="ChEBI" id="CHEBI:74447"/>
    </reaction>
</comment>
<comment type="similarity">
    <text evidence="1">Belongs to the class I-like SAM-binding methyltransferase superfamily. RNA M5U methyltransferase family. TrmA subfamily.</text>
</comment>
<organism>
    <name type="scientific">Acinetobacter baylyi (strain ATCC 33305 / BD413 / ADP1)</name>
    <dbReference type="NCBI Taxonomy" id="62977"/>
    <lineage>
        <taxon>Bacteria</taxon>
        <taxon>Pseudomonadati</taxon>
        <taxon>Pseudomonadota</taxon>
        <taxon>Gammaproteobacteria</taxon>
        <taxon>Moraxellales</taxon>
        <taxon>Moraxellaceae</taxon>
        <taxon>Acinetobacter</taxon>
    </lineage>
</organism>
<feature type="chain" id="PRO_0000161857" description="tRNA/tmRNA (uracil-C(5))-methyltransferase">
    <location>
        <begin position="1"/>
        <end position="361"/>
    </location>
</feature>
<feature type="active site" description="Nucleophile" evidence="1">
    <location>
        <position position="319"/>
    </location>
</feature>
<feature type="active site" description="Proton acceptor" evidence="1">
    <location>
        <position position="353"/>
    </location>
</feature>
<feature type="binding site" evidence="1">
    <location>
        <position position="183"/>
    </location>
    <ligand>
        <name>S-adenosyl-L-methionine</name>
        <dbReference type="ChEBI" id="CHEBI:59789"/>
    </ligand>
</feature>
<feature type="binding site" evidence="1">
    <location>
        <position position="211"/>
    </location>
    <ligand>
        <name>S-adenosyl-L-methionine</name>
        <dbReference type="ChEBI" id="CHEBI:59789"/>
    </ligand>
</feature>
<feature type="binding site" evidence="1">
    <location>
        <position position="216"/>
    </location>
    <ligand>
        <name>S-adenosyl-L-methionine</name>
        <dbReference type="ChEBI" id="CHEBI:59789"/>
    </ligand>
</feature>
<feature type="binding site" evidence="1">
    <location>
        <position position="232"/>
    </location>
    <ligand>
        <name>S-adenosyl-L-methionine</name>
        <dbReference type="ChEBI" id="CHEBI:59789"/>
    </ligand>
</feature>
<feature type="binding site" evidence="1">
    <location>
        <position position="294"/>
    </location>
    <ligand>
        <name>S-adenosyl-L-methionine</name>
        <dbReference type="ChEBI" id="CHEBI:59789"/>
    </ligand>
</feature>
<sequence>MSQTYQQQLQSKIERITHQFAEFNPPALEVFESPEQHFRMRAEFRIWHTDNDLFYAMFERNEDGKQKEVIRVDEFPIADQSINQLMPRLLEELKANPTLSQRIFEADFLTTLSGEMLVTLIYHRKLDTEWESAAKALAEKLNIKIMGRSRGQKVIIGDDYVVEQLNVHGRTFKYKQIESSFTQPNAEVCQKMLTWACDVIQGSNQDLLELYCGNGNFTLPLSLHFRRVLATELAKSSVYAAQWNIEQNQIENIQIARLSAEEFTQAYQGEREFRRLQEANIDIQSYEFDTIFVDPPRAGIDDETLKLLKGFKRILYISCNPDTLYNNLKTLSQTHKITRFALFDQFPFTHHVESGVLLELI</sequence>
<proteinExistence type="inferred from homology"/>
<accession>Q6FBS0</accession>
<keyword id="KW-0489">Methyltransferase</keyword>
<keyword id="KW-0949">S-adenosyl-L-methionine</keyword>
<keyword id="KW-0808">Transferase</keyword>
<keyword id="KW-0819">tRNA processing</keyword>
<gene>
    <name evidence="1" type="primary">trmA</name>
    <name type="ordered locus">ACIAD1645</name>
</gene>
<protein>
    <recommendedName>
        <fullName evidence="1">tRNA/tmRNA (uracil-C(5))-methyltransferase</fullName>
        <ecNumber evidence="1">2.1.1.-</ecNumber>
        <ecNumber evidence="1">2.1.1.35</ecNumber>
    </recommendedName>
    <alternativeName>
        <fullName evidence="1">tRNA (uracil(54)-C(5))-methyltransferase</fullName>
    </alternativeName>
    <alternativeName>
        <fullName evidence="1">tRNA(m5U54)-methyltransferase</fullName>
        <shortName evidence="1">RUMT</shortName>
    </alternativeName>
    <alternativeName>
        <fullName evidence="1">tmRNA (uracil(341)-C(5))-methyltransferase</fullName>
    </alternativeName>
</protein>
<dbReference type="EC" id="2.1.1.-" evidence="1"/>
<dbReference type="EC" id="2.1.1.35" evidence="1"/>
<dbReference type="EMBL" id="CR543861">
    <property type="protein sequence ID" value="CAG68491.1"/>
    <property type="molecule type" value="Genomic_DNA"/>
</dbReference>
<dbReference type="RefSeq" id="WP_004924950.1">
    <property type="nucleotide sequence ID" value="NC_005966.1"/>
</dbReference>
<dbReference type="SMR" id="Q6FBS0"/>
<dbReference type="STRING" id="202950.GCA_001485005_03292"/>
<dbReference type="GeneID" id="45234031"/>
<dbReference type="KEGG" id="aci:ACIAD1645"/>
<dbReference type="eggNOG" id="COG2265">
    <property type="taxonomic scope" value="Bacteria"/>
</dbReference>
<dbReference type="HOGENOM" id="CLU_043022_0_0_6"/>
<dbReference type="OrthoDB" id="9804590at2"/>
<dbReference type="BioCyc" id="ASP62977:ACIAD_RS07550-MONOMER"/>
<dbReference type="Proteomes" id="UP000000430">
    <property type="component" value="Chromosome"/>
</dbReference>
<dbReference type="GO" id="GO:0005829">
    <property type="term" value="C:cytosol"/>
    <property type="evidence" value="ECO:0007669"/>
    <property type="project" value="TreeGrafter"/>
</dbReference>
<dbReference type="GO" id="GO:0019843">
    <property type="term" value="F:rRNA binding"/>
    <property type="evidence" value="ECO:0007669"/>
    <property type="project" value="TreeGrafter"/>
</dbReference>
<dbReference type="GO" id="GO:0030697">
    <property type="term" value="F:tRNA (uracil(54)-C5)-methyltransferase activity, S-adenosyl methionine-dependent"/>
    <property type="evidence" value="ECO:0007669"/>
    <property type="project" value="UniProtKB-UniRule"/>
</dbReference>
<dbReference type="GO" id="GO:0000049">
    <property type="term" value="F:tRNA binding"/>
    <property type="evidence" value="ECO:0007669"/>
    <property type="project" value="TreeGrafter"/>
</dbReference>
<dbReference type="GO" id="GO:0030488">
    <property type="term" value="P:tRNA methylation"/>
    <property type="evidence" value="ECO:0007669"/>
    <property type="project" value="UniProtKB-UniRule"/>
</dbReference>
<dbReference type="CDD" id="cd02440">
    <property type="entry name" value="AdoMet_MTases"/>
    <property type="match status" value="1"/>
</dbReference>
<dbReference type="FunFam" id="2.40.50.1070:FF:000001">
    <property type="entry name" value="tRNA/tmRNA (uracil-C(5))-methyltransferase"/>
    <property type="match status" value="1"/>
</dbReference>
<dbReference type="FunFam" id="3.40.50.150:FF:000012">
    <property type="entry name" value="tRNA/tmRNA (uracil-C(5))-methyltransferase"/>
    <property type="match status" value="1"/>
</dbReference>
<dbReference type="Gene3D" id="2.40.50.1070">
    <property type="match status" value="1"/>
</dbReference>
<dbReference type="Gene3D" id="3.40.50.150">
    <property type="entry name" value="Vaccinia Virus protein VP39"/>
    <property type="match status" value="1"/>
</dbReference>
<dbReference type="HAMAP" id="MF_01011">
    <property type="entry name" value="RNA_methyltr_TrmA"/>
    <property type="match status" value="1"/>
</dbReference>
<dbReference type="InterPro" id="IPR030390">
    <property type="entry name" value="MeTrfase_TrmA_AS"/>
</dbReference>
<dbReference type="InterPro" id="IPR029063">
    <property type="entry name" value="SAM-dependent_MTases_sf"/>
</dbReference>
<dbReference type="InterPro" id="IPR011869">
    <property type="entry name" value="TrmA_MeTrfase"/>
</dbReference>
<dbReference type="InterPro" id="IPR010280">
    <property type="entry name" value="U5_MeTrfase_fam"/>
</dbReference>
<dbReference type="NCBIfam" id="TIGR02143">
    <property type="entry name" value="trmA_only"/>
    <property type="match status" value="1"/>
</dbReference>
<dbReference type="PANTHER" id="PTHR47790">
    <property type="entry name" value="TRNA/TMRNA (URACIL-C(5))-METHYLTRANSFERASE"/>
    <property type="match status" value="1"/>
</dbReference>
<dbReference type="PANTHER" id="PTHR47790:SF2">
    <property type="entry name" value="TRNA_TMRNA (URACIL-C(5))-METHYLTRANSFERASE"/>
    <property type="match status" value="1"/>
</dbReference>
<dbReference type="Pfam" id="PF05958">
    <property type="entry name" value="tRNA_U5-meth_tr"/>
    <property type="match status" value="1"/>
</dbReference>
<dbReference type="SUPFAM" id="SSF53335">
    <property type="entry name" value="S-adenosyl-L-methionine-dependent methyltransferases"/>
    <property type="match status" value="1"/>
</dbReference>
<dbReference type="PROSITE" id="PS51687">
    <property type="entry name" value="SAM_MT_RNA_M5U"/>
    <property type="match status" value="1"/>
</dbReference>
<dbReference type="PROSITE" id="PS01230">
    <property type="entry name" value="TRMA_1"/>
    <property type="match status" value="1"/>
</dbReference>
<name>TRMA_ACIAD</name>
<reference key="1">
    <citation type="journal article" date="2004" name="Nucleic Acids Res.">
        <title>Unique features revealed by the genome sequence of Acinetobacter sp. ADP1, a versatile and naturally transformation competent bacterium.</title>
        <authorList>
            <person name="Barbe V."/>
            <person name="Vallenet D."/>
            <person name="Fonknechten N."/>
            <person name="Kreimeyer A."/>
            <person name="Oztas S."/>
            <person name="Labarre L."/>
            <person name="Cruveiller S."/>
            <person name="Robert C."/>
            <person name="Duprat S."/>
            <person name="Wincker P."/>
            <person name="Ornston L.N."/>
            <person name="Weissenbach J."/>
            <person name="Marliere P."/>
            <person name="Cohen G.N."/>
            <person name="Medigue C."/>
        </authorList>
    </citation>
    <scope>NUCLEOTIDE SEQUENCE [LARGE SCALE GENOMIC DNA]</scope>
    <source>
        <strain>ATCC 33305 / BD413 / ADP1</strain>
    </source>
</reference>